<name>RL10_CUPMC</name>
<accession>Q1LI18</accession>
<sequence length="173" mass="17930">MPLNIEDKKAVVAEVSAQVAKAQTIVVAEYRGITVGDLTKLRATARTQGVYLRVLKNTLARRAVEGTPFAGLAEQMTGPLIYGISEDAVSSAKVLNDFAKTNDKLVLRAGSYNGNVLDAGAVKALASIPSRDELIAQLLGVMQAPVSGFARLLAAVAAKKAEGAPAEAEAPAA</sequence>
<protein>
    <recommendedName>
        <fullName evidence="1">Large ribosomal subunit protein uL10</fullName>
    </recommendedName>
    <alternativeName>
        <fullName evidence="2">50S ribosomal protein L10</fullName>
    </alternativeName>
</protein>
<gene>
    <name evidence="1" type="primary">rplJ</name>
    <name type="ordered locus">Rmet_3336</name>
</gene>
<organism>
    <name type="scientific">Cupriavidus metallidurans (strain ATCC 43123 / DSM 2839 / NBRC 102507 / CH34)</name>
    <name type="common">Ralstonia metallidurans</name>
    <dbReference type="NCBI Taxonomy" id="266264"/>
    <lineage>
        <taxon>Bacteria</taxon>
        <taxon>Pseudomonadati</taxon>
        <taxon>Pseudomonadota</taxon>
        <taxon>Betaproteobacteria</taxon>
        <taxon>Burkholderiales</taxon>
        <taxon>Burkholderiaceae</taxon>
        <taxon>Cupriavidus</taxon>
    </lineage>
</organism>
<proteinExistence type="inferred from homology"/>
<feature type="chain" id="PRO_1000005569" description="Large ribosomal subunit protein uL10">
    <location>
        <begin position="1"/>
        <end position="173"/>
    </location>
</feature>
<dbReference type="EMBL" id="CP000352">
    <property type="protein sequence ID" value="ABF10208.1"/>
    <property type="molecule type" value="Genomic_DNA"/>
</dbReference>
<dbReference type="RefSeq" id="WP_008649194.1">
    <property type="nucleotide sequence ID" value="NC_007973.1"/>
</dbReference>
<dbReference type="SMR" id="Q1LI18"/>
<dbReference type="STRING" id="266264.Rmet_3336"/>
<dbReference type="GeneID" id="60826581"/>
<dbReference type="KEGG" id="rme:Rmet_3336"/>
<dbReference type="eggNOG" id="COG0244">
    <property type="taxonomic scope" value="Bacteria"/>
</dbReference>
<dbReference type="HOGENOM" id="CLU_092227_0_0_4"/>
<dbReference type="Proteomes" id="UP000002429">
    <property type="component" value="Chromosome"/>
</dbReference>
<dbReference type="GO" id="GO:0015934">
    <property type="term" value="C:large ribosomal subunit"/>
    <property type="evidence" value="ECO:0007669"/>
    <property type="project" value="InterPro"/>
</dbReference>
<dbReference type="GO" id="GO:0070180">
    <property type="term" value="F:large ribosomal subunit rRNA binding"/>
    <property type="evidence" value="ECO:0007669"/>
    <property type="project" value="UniProtKB-UniRule"/>
</dbReference>
<dbReference type="GO" id="GO:0003735">
    <property type="term" value="F:structural constituent of ribosome"/>
    <property type="evidence" value="ECO:0007669"/>
    <property type="project" value="InterPro"/>
</dbReference>
<dbReference type="GO" id="GO:0006412">
    <property type="term" value="P:translation"/>
    <property type="evidence" value="ECO:0007669"/>
    <property type="project" value="UniProtKB-UniRule"/>
</dbReference>
<dbReference type="CDD" id="cd05797">
    <property type="entry name" value="Ribosomal_L10"/>
    <property type="match status" value="1"/>
</dbReference>
<dbReference type="Gene3D" id="3.30.70.1730">
    <property type="match status" value="1"/>
</dbReference>
<dbReference type="Gene3D" id="6.10.250.290">
    <property type="match status" value="1"/>
</dbReference>
<dbReference type="HAMAP" id="MF_00362">
    <property type="entry name" value="Ribosomal_uL10"/>
    <property type="match status" value="1"/>
</dbReference>
<dbReference type="InterPro" id="IPR001790">
    <property type="entry name" value="Ribosomal_uL10"/>
</dbReference>
<dbReference type="InterPro" id="IPR043141">
    <property type="entry name" value="Ribosomal_uL10-like_sf"/>
</dbReference>
<dbReference type="InterPro" id="IPR022973">
    <property type="entry name" value="Ribosomal_uL10_bac"/>
</dbReference>
<dbReference type="InterPro" id="IPR047865">
    <property type="entry name" value="Ribosomal_uL10_bac_type"/>
</dbReference>
<dbReference type="InterPro" id="IPR002363">
    <property type="entry name" value="Ribosomal_uL10_CS_bac"/>
</dbReference>
<dbReference type="NCBIfam" id="NF000955">
    <property type="entry name" value="PRK00099.1-1"/>
    <property type="match status" value="1"/>
</dbReference>
<dbReference type="PANTHER" id="PTHR11560">
    <property type="entry name" value="39S RIBOSOMAL PROTEIN L10, MITOCHONDRIAL"/>
    <property type="match status" value="1"/>
</dbReference>
<dbReference type="Pfam" id="PF00466">
    <property type="entry name" value="Ribosomal_L10"/>
    <property type="match status" value="1"/>
</dbReference>
<dbReference type="SUPFAM" id="SSF160369">
    <property type="entry name" value="Ribosomal protein L10-like"/>
    <property type="match status" value="1"/>
</dbReference>
<dbReference type="PROSITE" id="PS01109">
    <property type="entry name" value="RIBOSOMAL_L10"/>
    <property type="match status" value="1"/>
</dbReference>
<keyword id="KW-1185">Reference proteome</keyword>
<keyword id="KW-0687">Ribonucleoprotein</keyword>
<keyword id="KW-0689">Ribosomal protein</keyword>
<keyword id="KW-0694">RNA-binding</keyword>
<keyword id="KW-0699">rRNA-binding</keyword>
<comment type="function">
    <text evidence="1">Forms part of the ribosomal stalk, playing a central role in the interaction of the ribosome with GTP-bound translation factors.</text>
</comment>
<comment type="subunit">
    <text evidence="1">Part of the ribosomal stalk of the 50S ribosomal subunit. The N-terminus interacts with L11 and the large rRNA to form the base of the stalk. The C-terminus forms an elongated spine to which L12 dimers bind in a sequential fashion forming a multimeric L10(L12)X complex.</text>
</comment>
<comment type="similarity">
    <text evidence="1">Belongs to the universal ribosomal protein uL10 family.</text>
</comment>
<evidence type="ECO:0000255" key="1">
    <source>
        <dbReference type="HAMAP-Rule" id="MF_00362"/>
    </source>
</evidence>
<evidence type="ECO:0000305" key="2"/>
<reference key="1">
    <citation type="journal article" date="2010" name="PLoS ONE">
        <title>The complete genome sequence of Cupriavidus metallidurans strain CH34, a master survivalist in harsh and anthropogenic environments.</title>
        <authorList>
            <person name="Janssen P.J."/>
            <person name="Van Houdt R."/>
            <person name="Moors H."/>
            <person name="Monsieurs P."/>
            <person name="Morin N."/>
            <person name="Michaux A."/>
            <person name="Benotmane M.A."/>
            <person name="Leys N."/>
            <person name="Vallaeys T."/>
            <person name="Lapidus A."/>
            <person name="Monchy S."/>
            <person name="Medigue C."/>
            <person name="Taghavi S."/>
            <person name="McCorkle S."/>
            <person name="Dunn J."/>
            <person name="van der Lelie D."/>
            <person name="Mergeay M."/>
        </authorList>
    </citation>
    <scope>NUCLEOTIDE SEQUENCE [LARGE SCALE GENOMIC DNA]</scope>
    <source>
        <strain>ATCC 43123 / DSM 2839 / NBRC 102507 / CH34</strain>
    </source>
</reference>